<comment type="function">
    <text evidence="1">Catalyzes the GTP-dependent ribosomal translocation step during translation elongation. During this step, the ribosome changes from the pre-translocational (PRE) to the post-translocational (POST) state as the newly formed A-site-bound peptidyl-tRNA and P-site-bound deacylated tRNA move to the P and E sites, respectively. Catalyzes the coordinated movement of the two tRNA molecules, the mRNA and conformational changes in the ribosome.</text>
</comment>
<comment type="subcellular location">
    <subcellularLocation>
        <location evidence="1">Cytoplasm</location>
    </subcellularLocation>
</comment>
<comment type="similarity">
    <text evidence="1">Belongs to the TRAFAC class translation factor GTPase superfamily. Classic translation factor GTPase family. EF-G/EF-2 subfamily.</text>
</comment>
<accession>Q8EIJ7</accession>
<name>EFG2_SHEON</name>
<organism>
    <name type="scientific">Shewanella oneidensis (strain ATCC 700550 / JCM 31522 / CIP 106686 / LMG 19005 / NCIMB 14063 / MR-1)</name>
    <dbReference type="NCBI Taxonomy" id="211586"/>
    <lineage>
        <taxon>Bacteria</taxon>
        <taxon>Pseudomonadati</taxon>
        <taxon>Pseudomonadota</taxon>
        <taxon>Gammaproteobacteria</taxon>
        <taxon>Alteromonadales</taxon>
        <taxon>Shewanellaceae</taxon>
        <taxon>Shewanella</taxon>
    </lineage>
</organism>
<proteinExistence type="inferred from homology"/>
<protein>
    <recommendedName>
        <fullName evidence="1">Elongation factor G 2</fullName>
        <shortName evidence="1">EF-G 2</shortName>
    </recommendedName>
</protein>
<keyword id="KW-0963">Cytoplasm</keyword>
<keyword id="KW-0251">Elongation factor</keyword>
<keyword id="KW-0342">GTP-binding</keyword>
<keyword id="KW-0547">Nucleotide-binding</keyword>
<keyword id="KW-0648">Protein biosynthesis</keyword>
<keyword id="KW-1185">Reference proteome</keyword>
<dbReference type="EMBL" id="AE014299">
    <property type="protein sequence ID" value="AAN53918.1"/>
    <property type="molecule type" value="Genomic_DNA"/>
</dbReference>
<dbReference type="RefSeq" id="NP_716473.1">
    <property type="nucleotide sequence ID" value="NC_004347.2"/>
</dbReference>
<dbReference type="RefSeq" id="WP_011071132.1">
    <property type="nucleotide sequence ID" value="NC_004347.2"/>
</dbReference>
<dbReference type="SMR" id="Q8EIJ7"/>
<dbReference type="STRING" id="211586.SO_0842"/>
<dbReference type="PaxDb" id="211586-SO_0842"/>
<dbReference type="KEGG" id="son:SO_0842"/>
<dbReference type="PATRIC" id="fig|211586.12.peg.806"/>
<dbReference type="eggNOG" id="COG0480">
    <property type="taxonomic scope" value="Bacteria"/>
</dbReference>
<dbReference type="HOGENOM" id="CLU_002794_4_1_6"/>
<dbReference type="OrthoDB" id="9804431at2"/>
<dbReference type="PhylomeDB" id="Q8EIJ7"/>
<dbReference type="BioCyc" id="SONE211586:G1GMP-784-MONOMER"/>
<dbReference type="Proteomes" id="UP000008186">
    <property type="component" value="Chromosome"/>
</dbReference>
<dbReference type="GO" id="GO:0005737">
    <property type="term" value="C:cytoplasm"/>
    <property type="evidence" value="ECO:0007669"/>
    <property type="project" value="UniProtKB-SubCell"/>
</dbReference>
<dbReference type="GO" id="GO:0005525">
    <property type="term" value="F:GTP binding"/>
    <property type="evidence" value="ECO:0007669"/>
    <property type="project" value="UniProtKB-UniRule"/>
</dbReference>
<dbReference type="GO" id="GO:0003924">
    <property type="term" value="F:GTPase activity"/>
    <property type="evidence" value="ECO:0007669"/>
    <property type="project" value="InterPro"/>
</dbReference>
<dbReference type="GO" id="GO:0097216">
    <property type="term" value="F:guanosine tetraphosphate binding"/>
    <property type="evidence" value="ECO:0007669"/>
    <property type="project" value="UniProtKB-ARBA"/>
</dbReference>
<dbReference type="GO" id="GO:0003746">
    <property type="term" value="F:translation elongation factor activity"/>
    <property type="evidence" value="ECO:0007669"/>
    <property type="project" value="UniProtKB-UniRule"/>
</dbReference>
<dbReference type="GO" id="GO:0032790">
    <property type="term" value="P:ribosome disassembly"/>
    <property type="evidence" value="ECO:0000318"/>
    <property type="project" value="GO_Central"/>
</dbReference>
<dbReference type="CDD" id="cd01886">
    <property type="entry name" value="EF-G"/>
    <property type="match status" value="1"/>
</dbReference>
<dbReference type="CDD" id="cd16262">
    <property type="entry name" value="EFG_III"/>
    <property type="match status" value="1"/>
</dbReference>
<dbReference type="CDD" id="cd01434">
    <property type="entry name" value="EFG_mtEFG1_IV"/>
    <property type="match status" value="1"/>
</dbReference>
<dbReference type="CDD" id="cd03713">
    <property type="entry name" value="EFG_mtEFG_C"/>
    <property type="match status" value="1"/>
</dbReference>
<dbReference type="CDD" id="cd04088">
    <property type="entry name" value="EFG_mtEFG_II"/>
    <property type="match status" value="1"/>
</dbReference>
<dbReference type="FunFam" id="2.40.30.10:FF:000006">
    <property type="entry name" value="Elongation factor G"/>
    <property type="match status" value="1"/>
</dbReference>
<dbReference type="FunFam" id="3.30.230.10:FF:000003">
    <property type="entry name" value="Elongation factor G"/>
    <property type="match status" value="1"/>
</dbReference>
<dbReference type="FunFam" id="3.30.70.240:FF:000001">
    <property type="entry name" value="Elongation factor G"/>
    <property type="match status" value="1"/>
</dbReference>
<dbReference type="FunFam" id="3.30.70.870:FF:000006">
    <property type="entry name" value="Elongation factor G"/>
    <property type="match status" value="1"/>
</dbReference>
<dbReference type="FunFam" id="3.40.50.300:FF:000029">
    <property type="entry name" value="Elongation factor G"/>
    <property type="match status" value="1"/>
</dbReference>
<dbReference type="Gene3D" id="3.30.230.10">
    <property type="match status" value="1"/>
</dbReference>
<dbReference type="Gene3D" id="3.30.70.240">
    <property type="match status" value="1"/>
</dbReference>
<dbReference type="Gene3D" id="3.30.70.870">
    <property type="entry name" value="Elongation Factor G (Translational Gtpase), domain 3"/>
    <property type="match status" value="1"/>
</dbReference>
<dbReference type="Gene3D" id="3.40.50.300">
    <property type="entry name" value="P-loop containing nucleotide triphosphate hydrolases"/>
    <property type="match status" value="1"/>
</dbReference>
<dbReference type="Gene3D" id="2.40.30.10">
    <property type="entry name" value="Translation factors"/>
    <property type="match status" value="1"/>
</dbReference>
<dbReference type="HAMAP" id="MF_00054_B">
    <property type="entry name" value="EF_G_EF_2_B"/>
    <property type="match status" value="1"/>
</dbReference>
<dbReference type="InterPro" id="IPR041095">
    <property type="entry name" value="EFG_II"/>
</dbReference>
<dbReference type="InterPro" id="IPR009022">
    <property type="entry name" value="EFG_III"/>
</dbReference>
<dbReference type="InterPro" id="IPR035647">
    <property type="entry name" value="EFG_III/V"/>
</dbReference>
<dbReference type="InterPro" id="IPR047872">
    <property type="entry name" value="EFG_IV"/>
</dbReference>
<dbReference type="InterPro" id="IPR035649">
    <property type="entry name" value="EFG_V"/>
</dbReference>
<dbReference type="InterPro" id="IPR000640">
    <property type="entry name" value="EFG_V-like"/>
</dbReference>
<dbReference type="InterPro" id="IPR004161">
    <property type="entry name" value="EFTu-like_2"/>
</dbReference>
<dbReference type="InterPro" id="IPR031157">
    <property type="entry name" value="G_TR_CS"/>
</dbReference>
<dbReference type="InterPro" id="IPR027417">
    <property type="entry name" value="P-loop_NTPase"/>
</dbReference>
<dbReference type="InterPro" id="IPR020568">
    <property type="entry name" value="Ribosomal_Su5_D2-typ_SF"/>
</dbReference>
<dbReference type="InterPro" id="IPR014721">
    <property type="entry name" value="Ribsml_uS5_D2-typ_fold_subgr"/>
</dbReference>
<dbReference type="InterPro" id="IPR005225">
    <property type="entry name" value="Small_GTP-bd"/>
</dbReference>
<dbReference type="InterPro" id="IPR000795">
    <property type="entry name" value="T_Tr_GTP-bd_dom"/>
</dbReference>
<dbReference type="InterPro" id="IPR009000">
    <property type="entry name" value="Transl_B-barrel_sf"/>
</dbReference>
<dbReference type="InterPro" id="IPR004540">
    <property type="entry name" value="Transl_elong_EFG/EF2"/>
</dbReference>
<dbReference type="InterPro" id="IPR005517">
    <property type="entry name" value="Transl_elong_EFG/EF2_IV"/>
</dbReference>
<dbReference type="NCBIfam" id="TIGR00484">
    <property type="entry name" value="EF-G"/>
    <property type="match status" value="1"/>
</dbReference>
<dbReference type="NCBIfam" id="NF009381">
    <property type="entry name" value="PRK12740.1-5"/>
    <property type="match status" value="1"/>
</dbReference>
<dbReference type="NCBIfam" id="TIGR00231">
    <property type="entry name" value="small_GTP"/>
    <property type="match status" value="1"/>
</dbReference>
<dbReference type="PANTHER" id="PTHR43261:SF5">
    <property type="entry name" value="ELONGATION FACTOR G 1"/>
    <property type="match status" value="1"/>
</dbReference>
<dbReference type="PANTHER" id="PTHR43261">
    <property type="entry name" value="TRANSLATION ELONGATION FACTOR G-RELATED"/>
    <property type="match status" value="1"/>
</dbReference>
<dbReference type="Pfam" id="PF00679">
    <property type="entry name" value="EFG_C"/>
    <property type="match status" value="1"/>
</dbReference>
<dbReference type="Pfam" id="PF14492">
    <property type="entry name" value="EFG_III"/>
    <property type="match status" value="1"/>
</dbReference>
<dbReference type="Pfam" id="PF03764">
    <property type="entry name" value="EFG_IV"/>
    <property type="match status" value="1"/>
</dbReference>
<dbReference type="Pfam" id="PF00009">
    <property type="entry name" value="GTP_EFTU"/>
    <property type="match status" value="1"/>
</dbReference>
<dbReference type="Pfam" id="PF03144">
    <property type="entry name" value="GTP_EFTU_D2"/>
    <property type="match status" value="1"/>
</dbReference>
<dbReference type="PRINTS" id="PR00315">
    <property type="entry name" value="ELONGATNFCT"/>
</dbReference>
<dbReference type="SMART" id="SM00838">
    <property type="entry name" value="EFG_C"/>
    <property type="match status" value="1"/>
</dbReference>
<dbReference type="SMART" id="SM00889">
    <property type="entry name" value="EFG_IV"/>
    <property type="match status" value="1"/>
</dbReference>
<dbReference type="SUPFAM" id="SSF54980">
    <property type="entry name" value="EF-G C-terminal domain-like"/>
    <property type="match status" value="2"/>
</dbReference>
<dbReference type="SUPFAM" id="SSF52540">
    <property type="entry name" value="P-loop containing nucleoside triphosphate hydrolases"/>
    <property type="match status" value="1"/>
</dbReference>
<dbReference type="SUPFAM" id="SSF54211">
    <property type="entry name" value="Ribosomal protein S5 domain 2-like"/>
    <property type="match status" value="1"/>
</dbReference>
<dbReference type="SUPFAM" id="SSF50447">
    <property type="entry name" value="Translation proteins"/>
    <property type="match status" value="1"/>
</dbReference>
<dbReference type="PROSITE" id="PS00301">
    <property type="entry name" value="G_TR_1"/>
    <property type="match status" value="1"/>
</dbReference>
<dbReference type="PROSITE" id="PS51722">
    <property type="entry name" value="G_TR_2"/>
    <property type="match status" value="1"/>
</dbReference>
<sequence>MTELSKYRNIGIFAHVDAGKTTTTERILKLTGKIHKIGEVHDGESTTDFMVQEAERGITIQSAAVSCFWKDHRFNVIDTPGHVDFTVEVYRSLKVLDGGIAVFCGSGGVEPQSETNWRYANESEVARIIFVNKLDRMGADFLRVVKQTKDVLAANPLVMVLPIGIEDEFCGVVDLLTRKAYVWDDSGIPENFEVKDVPANMVDLVEEYREMLIETAVEQDDDLLEAYMEGEEPSIEDLKRCIRKGTRTMAFFPTFCGSAFKNKGMQLVLDAVVDYLPAPDEVDPQPLTDEEGNETGEYAIVSADESLKALAFKIMDDRFGALTFVRIYAGRLKKGDTILNSATGKTERIGRMCEMYANDRIEIESAEAGDIIAIVGMKNVQTGHTLCDVKHPCTLEAMVFPEPVISIAVAPKDKGGSEKMAIAIGKMIAEDPSFRVETDEDSGETILKGMGELHLDIKVDILKRTYGVELIVGEPQVAYRETITAMVEDQYTHKKQSGGSGQFGKIEYIIRPGEPNSGFVFKSSVVGGSVPKEFWPAVEKGFASMMNTGTIAGFPVLDVEFELTDGAYHAVDSSAIAFEIAAKAAFRQSIAKAKPQLLEPIMKVDVFSPDDNVGDVIGDLNRRRGMIKDQVAGITGVRVKADVPLSEMFGYIGSLRTMTSGRGQFSMEFSHYSPCPNSVADKVVEQVKERKAAEAKK</sequence>
<gene>
    <name type="primary">fusB</name>
    <name type="synonym">fusA-2</name>
    <name type="ordered locus">SO_0842</name>
</gene>
<reference key="1">
    <citation type="journal article" date="2002" name="Nat. Biotechnol.">
        <title>Genome sequence of the dissimilatory metal ion-reducing bacterium Shewanella oneidensis.</title>
        <authorList>
            <person name="Heidelberg J.F."/>
            <person name="Paulsen I.T."/>
            <person name="Nelson K.E."/>
            <person name="Gaidos E.J."/>
            <person name="Nelson W.C."/>
            <person name="Read T.D."/>
            <person name="Eisen J.A."/>
            <person name="Seshadri R."/>
            <person name="Ward N.L."/>
            <person name="Methe B.A."/>
            <person name="Clayton R.A."/>
            <person name="Meyer T."/>
            <person name="Tsapin A."/>
            <person name="Scott J."/>
            <person name="Beanan M.J."/>
            <person name="Brinkac L.M."/>
            <person name="Daugherty S.C."/>
            <person name="DeBoy R.T."/>
            <person name="Dodson R.J."/>
            <person name="Durkin A.S."/>
            <person name="Haft D.H."/>
            <person name="Kolonay J.F."/>
            <person name="Madupu R."/>
            <person name="Peterson J.D."/>
            <person name="Umayam L.A."/>
            <person name="White O."/>
            <person name="Wolf A.M."/>
            <person name="Vamathevan J.J."/>
            <person name="Weidman J.F."/>
            <person name="Impraim M."/>
            <person name="Lee K."/>
            <person name="Berry K.J."/>
            <person name="Lee C."/>
            <person name="Mueller J."/>
            <person name="Khouri H.M."/>
            <person name="Gill J."/>
            <person name="Utterback T.R."/>
            <person name="McDonald L.A."/>
            <person name="Feldblyum T.V."/>
            <person name="Smith H.O."/>
            <person name="Venter J.C."/>
            <person name="Nealson K.H."/>
            <person name="Fraser C.M."/>
        </authorList>
    </citation>
    <scope>NUCLEOTIDE SEQUENCE [LARGE SCALE GENOMIC DNA]</scope>
    <source>
        <strain>ATCC 700550 / JCM 31522 / CIP 106686 / LMG 19005 / NCIMB 14063 / MR-1</strain>
    </source>
</reference>
<feature type="chain" id="PRO_0000091210" description="Elongation factor G 2">
    <location>
        <begin position="1"/>
        <end position="697"/>
    </location>
</feature>
<feature type="domain" description="tr-type G">
    <location>
        <begin position="5"/>
        <end position="280"/>
    </location>
</feature>
<feature type="binding site" evidence="1">
    <location>
        <begin position="14"/>
        <end position="21"/>
    </location>
    <ligand>
        <name>GTP</name>
        <dbReference type="ChEBI" id="CHEBI:37565"/>
    </ligand>
</feature>
<feature type="binding site" evidence="1">
    <location>
        <begin position="78"/>
        <end position="82"/>
    </location>
    <ligand>
        <name>GTP</name>
        <dbReference type="ChEBI" id="CHEBI:37565"/>
    </ligand>
</feature>
<feature type="binding site" evidence="1">
    <location>
        <begin position="132"/>
        <end position="135"/>
    </location>
    <ligand>
        <name>GTP</name>
        <dbReference type="ChEBI" id="CHEBI:37565"/>
    </ligand>
</feature>
<evidence type="ECO:0000255" key="1">
    <source>
        <dbReference type="HAMAP-Rule" id="MF_00054"/>
    </source>
</evidence>